<protein>
    <recommendedName>
        <fullName>UPF0337 protein LJ_0034.1</fullName>
    </recommendedName>
</protein>
<evidence type="ECO:0000256" key="1">
    <source>
        <dbReference type="SAM" id="MobiDB-lite"/>
    </source>
</evidence>
<evidence type="ECO:0000305" key="2"/>
<gene>
    <name type="ordered locus">LJ_0034.1</name>
    <name type="ORF">LJ_0034b</name>
</gene>
<name>Y34B_LACJO</name>
<feature type="chain" id="PRO_0000210005" description="UPF0337 protein LJ_0034.1">
    <location>
        <begin position="1"/>
        <end position="53"/>
    </location>
</feature>
<feature type="region of interest" description="Disordered" evidence="1">
    <location>
        <begin position="27"/>
        <end position="53"/>
    </location>
</feature>
<feature type="compositionally biased region" description="Basic and acidic residues" evidence="1">
    <location>
        <begin position="44"/>
        <end position="53"/>
    </location>
</feature>
<organism>
    <name type="scientific">Lactobacillus johnsonii (strain CNCM I-12250 / La1 / NCC 533)</name>
    <dbReference type="NCBI Taxonomy" id="257314"/>
    <lineage>
        <taxon>Bacteria</taxon>
        <taxon>Bacillati</taxon>
        <taxon>Bacillota</taxon>
        <taxon>Bacilli</taxon>
        <taxon>Lactobacillales</taxon>
        <taxon>Lactobacillaceae</taxon>
        <taxon>Lactobacillus</taxon>
    </lineage>
</organism>
<proteinExistence type="inferred from homology"/>
<reference key="1">
    <citation type="journal article" date="2004" name="Proc. Natl. Acad. Sci. U.S.A.">
        <title>The genome sequence of the probiotic intestinal bacterium Lactobacillus johnsonii NCC 533.</title>
        <authorList>
            <person name="Pridmore R.D."/>
            <person name="Berger B."/>
            <person name="Desiere F."/>
            <person name="Vilanova D."/>
            <person name="Barretto C."/>
            <person name="Pittet A.-C."/>
            <person name="Zwahlen M.-C."/>
            <person name="Rouvet M."/>
            <person name="Altermann E."/>
            <person name="Barrangou R."/>
            <person name="Mollet B."/>
            <person name="Mercenier A."/>
            <person name="Klaenhammer T."/>
            <person name="Arigoni F."/>
            <person name="Schell M.A."/>
        </authorList>
    </citation>
    <scope>NUCLEOTIDE SEQUENCE [LARGE SCALE GENOMIC DNA]</scope>
    <source>
        <strain>CNCM I-1225 / La1 / NCC 533</strain>
    </source>
</reference>
<sequence length="53" mass="5794">MEDKHGIKDKVAGKLKEVEGKITGDKAREVEGKAQQAKGKVKSKATEVKEDLE</sequence>
<comment type="similarity">
    <text evidence="2">Belongs to the UPF0337 (CsbD) family.</text>
</comment>
<accession>Q74LZ9</accession>
<dbReference type="EMBL" id="AE017198">
    <property type="protein sequence ID" value="AAS08016.1"/>
    <property type="molecule type" value="Genomic_DNA"/>
</dbReference>
<dbReference type="SMR" id="Q74LZ9"/>
<dbReference type="KEGG" id="ljo:LJ_0034b"/>
<dbReference type="eggNOG" id="ENOG5030AET">
    <property type="taxonomic scope" value="Bacteria"/>
</dbReference>
<dbReference type="HOGENOM" id="CLU_135567_0_1_9"/>
<dbReference type="Proteomes" id="UP000000581">
    <property type="component" value="Chromosome"/>
</dbReference>
<dbReference type="Gene3D" id="1.10.1470.10">
    <property type="entry name" value="YjbJ"/>
    <property type="match status" value="1"/>
</dbReference>
<dbReference type="InterPro" id="IPR008462">
    <property type="entry name" value="CsbD"/>
</dbReference>
<dbReference type="InterPro" id="IPR036629">
    <property type="entry name" value="YjbJ_sf"/>
</dbReference>
<dbReference type="Pfam" id="PF05532">
    <property type="entry name" value="CsbD"/>
    <property type="match status" value="1"/>
</dbReference>
<dbReference type="SUPFAM" id="SSF69047">
    <property type="entry name" value="Hypothetical protein YjbJ"/>
    <property type="match status" value="1"/>
</dbReference>